<name>MOS_APTAU</name>
<accession>P87347</accession>
<proteinExistence type="inferred from homology"/>
<keyword id="KW-0067">ATP-binding</keyword>
<keyword id="KW-0418">Kinase</keyword>
<keyword id="KW-0547">Nucleotide-binding</keyword>
<keyword id="KW-0723">Serine/threonine-protein kinase</keyword>
<keyword id="KW-0808">Transferase</keyword>
<feature type="chain" id="PRO_0000086348" description="Serine/threonine-protein kinase mos">
    <location>
        <begin position="1" status="less than"/>
        <end position="200" status="greater than"/>
    </location>
</feature>
<feature type="domain" description="Protein kinase" evidence="1">
    <location>
        <begin position="2"/>
        <end position="200" status="greater than"/>
    </location>
</feature>
<feature type="active site" description="Proton acceptor" evidence="1 2">
    <location>
        <position position="143"/>
    </location>
</feature>
<feature type="binding site" evidence="1">
    <location>
        <begin position="8"/>
        <end position="16"/>
    </location>
    <ligand>
        <name>ATP</name>
        <dbReference type="ChEBI" id="CHEBI:30616"/>
    </ligand>
</feature>
<feature type="binding site" evidence="1">
    <location>
        <position position="29"/>
    </location>
    <ligand>
        <name>ATP</name>
        <dbReference type="ChEBI" id="CHEBI:30616"/>
    </ligand>
</feature>
<feature type="non-terminal residue">
    <location>
        <position position="1"/>
    </location>
</feature>
<feature type="non-terminal residue">
    <location>
        <position position="200"/>
    </location>
</feature>
<comment type="catalytic activity">
    <reaction>
        <text>L-seryl-[protein] + ATP = O-phospho-L-seryl-[protein] + ADP + H(+)</text>
        <dbReference type="Rhea" id="RHEA:17989"/>
        <dbReference type="Rhea" id="RHEA-COMP:9863"/>
        <dbReference type="Rhea" id="RHEA-COMP:11604"/>
        <dbReference type="ChEBI" id="CHEBI:15378"/>
        <dbReference type="ChEBI" id="CHEBI:29999"/>
        <dbReference type="ChEBI" id="CHEBI:30616"/>
        <dbReference type="ChEBI" id="CHEBI:83421"/>
        <dbReference type="ChEBI" id="CHEBI:456216"/>
        <dbReference type="EC" id="2.7.11.1"/>
    </reaction>
</comment>
<comment type="catalytic activity">
    <reaction>
        <text>L-threonyl-[protein] + ATP = O-phospho-L-threonyl-[protein] + ADP + H(+)</text>
        <dbReference type="Rhea" id="RHEA:46608"/>
        <dbReference type="Rhea" id="RHEA-COMP:11060"/>
        <dbReference type="Rhea" id="RHEA-COMP:11605"/>
        <dbReference type="ChEBI" id="CHEBI:15378"/>
        <dbReference type="ChEBI" id="CHEBI:30013"/>
        <dbReference type="ChEBI" id="CHEBI:30616"/>
        <dbReference type="ChEBI" id="CHEBI:61977"/>
        <dbReference type="ChEBI" id="CHEBI:456216"/>
        <dbReference type="EC" id="2.7.11.1"/>
    </reaction>
</comment>
<comment type="similarity">
    <text evidence="1">Belongs to the protein kinase superfamily. Ser/Thr protein kinase family.</text>
</comment>
<organism>
    <name type="scientific">Apteryx australis</name>
    <name type="common">Southern brown kiwi</name>
    <dbReference type="NCBI Taxonomy" id="8822"/>
    <lineage>
        <taxon>Eukaryota</taxon>
        <taxon>Metazoa</taxon>
        <taxon>Chordata</taxon>
        <taxon>Craniata</taxon>
        <taxon>Vertebrata</taxon>
        <taxon>Euteleostomi</taxon>
        <taxon>Archelosauria</taxon>
        <taxon>Archosauria</taxon>
        <taxon>Dinosauria</taxon>
        <taxon>Saurischia</taxon>
        <taxon>Theropoda</taxon>
        <taxon>Coelurosauria</taxon>
        <taxon>Aves</taxon>
        <taxon>Palaeognathae</taxon>
        <taxon>Apterygiformes</taxon>
        <taxon>Apterygidae</taxon>
        <taxon>Apteryx</taxon>
    </lineage>
</organism>
<reference key="1">
    <citation type="journal article" date="1997" name="Science">
        <title>Mass survival of birds across the Cretaceous-Tertiary boundary: molecular evidence.</title>
        <authorList>
            <person name="Cooper A."/>
            <person name="Penny D."/>
        </authorList>
    </citation>
    <scope>NUCLEOTIDE SEQUENCE [GENOMIC DNA]</scope>
    <source>
        <tissue>Blood</tissue>
    </source>
</reference>
<evidence type="ECO:0000255" key="1">
    <source>
        <dbReference type="PROSITE-ProRule" id="PRU00159"/>
    </source>
</evidence>
<evidence type="ECO:0000255" key="2">
    <source>
        <dbReference type="PROSITE-ProRule" id="PRU10027"/>
    </source>
</evidence>
<sequence length="200" mass="21488">QLCLLQPLGSGGFGSVYKATYHGATVAVKQVKKSSKNRLASRQSFWAELNVARLQHANVVRVVAASTCAPASQNSLGTIIMEYVGNITLHHVIYGTSDAWRQGEDDEGGCGKKALSMEETVCYSCDIMTGLAFLHSQGIVHLDLKPANVFITEQGVCKIGDFGCSQKLEDGLSQSPQVCQQGGTYTHRAPELLKGERVTA</sequence>
<dbReference type="EC" id="2.7.11.1"/>
<dbReference type="EMBL" id="U88426">
    <property type="protein sequence ID" value="AAC60086.1"/>
    <property type="molecule type" value="Genomic_DNA"/>
</dbReference>
<dbReference type="SMR" id="P87347"/>
<dbReference type="GO" id="GO:0005524">
    <property type="term" value="F:ATP binding"/>
    <property type="evidence" value="ECO:0007669"/>
    <property type="project" value="UniProtKB-KW"/>
</dbReference>
<dbReference type="GO" id="GO:0106310">
    <property type="term" value="F:protein serine kinase activity"/>
    <property type="evidence" value="ECO:0007669"/>
    <property type="project" value="RHEA"/>
</dbReference>
<dbReference type="GO" id="GO:0004674">
    <property type="term" value="F:protein serine/threonine kinase activity"/>
    <property type="evidence" value="ECO:0007669"/>
    <property type="project" value="UniProtKB-KW"/>
</dbReference>
<dbReference type="FunFam" id="3.30.200.20:FF:000316">
    <property type="entry name" value="Proto-oncogene serine/threonine-protein kinase mos"/>
    <property type="match status" value="1"/>
</dbReference>
<dbReference type="Gene3D" id="3.30.200.20">
    <property type="entry name" value="Phosphorylase Kinase, domain 1"/>
    <property type="match status" value="1"/>
</dbReference>
<dbReference type="Gene3D" id="1.10.510.10">
    <property type="entry name" value="Transferase(Phosphotransferase) domain 1"/>
    <property type="match status" value="1"/>
</dbReference>
<dbReference type="InterPro" id="IPR011009">
    <property type="entry name" value="Kinase-like_dom_sf"/>
</dbReference>
<dbReference type="InterPro" id="IPR000719">
    <property type="entry name" value="Prot_kinase_dom"/>
</dbReference>
<dbReference type="InterPro" id="IPR017441">
    <property type="entry name" value="Protein_kinase_ATP_BS"/>
</dbReference>
<dbReference type="InterPro" id="IPR008271">
    <property type="entry name" value="Ser/Thr_kinase_AS"/>
</dbReference>
<dbReference type="InterPro" id="IPR051681">
    <property type="entry name" value="Ser/Thr_Kinases-Pseudokinases"/>
</dbReference>
<dbReference type="PANTHER" id="PTHR44329">
    <property type="entry name" value="SERINE/THREONINE-PROTEIN KINASE TNNI3K-RELATED"/>
    <property type="match status" value="1"/>
</dbReference>
<dbReference type="PANTHER" id="PTHR44329:SF285">
    <property type="entry name" value="V-MOS MOLONEY MURINE SARCOMA VIRAL ONCO HOMOLOG"/>
    <property type="match status" value="1"/>
</dbReference>
<dbReference type="Pfam" id="PF00069">
    <property type="entry name" value="Pkinase"/>
    <property type="match status" value="1"/>
</dbReference>
<dbReference type="SMART" id="SM00220">
    <property type="entry name" value="S_TKc"/>
    <property type="match status" value="1"/>
</dbReference>
<dbReference type="SUPFAM" id="SSF56112">
    <property type="entry name" value="Protein kinase-like (PK-like)"/>
    <property type="match status" value="1"/>
</dbReference>
<dbReference type="PROSITE" id="PS00107">
    <property type="entry name" value="PROTEIN_KINASE_ATP"/>
    <property type="match status" value="1"/>
</dbReference>
<dbReference type="PROSITE" id="PS50011">
    <property type="entry name" value="PROTEIN_KINASE_DOM"/>
    <property type="match status" value="1"/>
</dbReference>
<dbReference type="PROSITE" id="PS00108">
    <property type="entry name" value="PROTEIN_KINASE_ST"/>
    <property type="match status" value="1"/>
</dbReference>
<gene>
    <name type="primary">MOS</name>
</gene>
<protein>
    <recommendedName>
        <fullName>Serine/threonine-protein kinase mos</fullName>
        <ecNumber>2.7.11.1</ecNumber>
    </recommendedName>
    <alternativeName>
        <fullName>Oocyte maturation factor mos</fullName>
    </alternativeName>
</protein>